<keyword id="KW-1185">Reference proteome</keyword>
<keyword id="KW-0687">Ribonucleoprotein</keyword>
<keyword id="KW-0689">Ribosomal protein</keyword>
<comment type="similarity">
    <text evidence="1">Belongs to the bacterial ribosomal protein bL35 family.</text>
</comment>
<proteinExistence type="inferred from homology"/>
<feature type="chain" id="PRO_1000050660" description="Large ribosomal subunit protein bL35">
    <location>
        <begin position="1"/>
        <end position="64"/>
    </location>
</feature>
<feature type="region of interest" description="Disordered" evidence="2">
    <location>
        <begin position="1"/>
        <end position="64"/>
    </location>
</feature>
<feature type="compositionally biased region" description="Polar residues" evidence="2">
    <location>
        <begin position="1"/>
        <end position="10"/>
    </location>
</feature>
<accession>A1A2C3</accession>
<reference key="1">
    <citation type="submission" date="2006-12" db="EMBL/GenBank/DDBJ databases">
        <title>Bifidobacterium adolescentis complete genome sequence.</title>
        <authorList>
            <person name="Suzuki T."/>
            <person name="Tsuda Y."/>
            <person name="Kanou N."/>
            <person name="Inoue T."/>
            <person name="Kumazaki K."/>
            <person name="Nagano S."/>
            <person name="Hirai S."/>
            <person name="Tanaka K."/>
            <person name="Watanabe K."/>
        </authorList>
    </citation>
    <scope>NUCLEOTIDE SEQUENCE [LARGE SCALE GENOMIC DNA]</scope>
    <source>
        <strain>ATCC 15703 / DSM 20083 / NCTC 11814 / E194a</strain>
    </source>
</reference>
<organism>
    <name type="scientific">Bifidobacterium adolescentis (strain ATCC 15703 / DSM 20083 / NCTC 11814 / E194a)</name>
    <dbReference type="NCBI Taxonomy" id="367928"/>
    <lineage>
        <taxon>Bacteria</taxon>
        <taxon>Bacillati</taxon>
        <taxon>Actinomycetota</taxon>
        <taxon>Actinomycetes</taxon>
        <taxon>Bifidobacteriales</taxon>
        <taxon>Bifidobacteriaceae</taxon>
        <taxon>Bifidobacterium</taxon>
    </lineage>
</organism>
<evidence type="ECO:0000255" key="1">
    <source>
        <dbReference type="HAMAP-Rule" id="MF_00514"/>
    </source>
</evidence>
<evidence type="ECO:0000256" key="2">
    <source>
        <dbReference type="SAM" id="MobiDB-lite"/>
    </source>
</evidence>
<evidence type="ECO:0000305" key="3"/>
<dbReference type="EMBL" id="AP009256">
    <property type="protein sequence ID" value="BAF39856.1"/>
    <property type="molecule type" value="Genomic_DNA"/>
</dbReference>
<dbReference type="RefSeq" id="WP_003810699.1">
    <property type="nucleotide sequence ID" value="NZ_CAXVNC010000002.1"/>
</dbReference>
<dbReference type="SMR" id="A1A2C3"/>
<dbReference type="STRING" id="367928.BAD_1075"/>
<dbReference type="PaxDb" id="1680-BADO_1126"/>
<dbReference type="GeneID" id="4556640"/>
<dbReference type="KEGG" id="bad:BAD_1075"/>
<dbReference type="HOGENOM" id="CLU_169643_4_2_11"/>
<dbReference type="Proteomes" id="UP000008702">
    <property type="component" value="Chromosome"/>
</dbReference>
<dbReference type="GO" id="GO:0022625">
    <property type="term" value="C:cytosolic large ribosomal subunit"/>
    <property type="evidence" value="ECO:0007669"/>
    <property type="project" value="TreeGrafter"/>
</dbReference>
<dbReference type="GO" id="GO:0003735">
    <property type="term" value="F:structural constituent of ribosome"/>
    <property type="evidence" value="ECO:0007669"/>
    <property type="project" value="InterPro"/>
</dbReference>
<dbReference type="GO" id="GO:0006412">
    <property type="term" value="P:translation"/>
    <property type="evidence" value="ECO:0007669"/>
    <property type="project" value="UniProtKB-UniRule"/>
</dbReference>
<dbReference type="FunFam" id="4.10.410.60:FF:000001">
    <property type="entry name" value="50S ribosomal protein L35"/>
    <property type="match status" value="1"/>
</dbReference>
<dbReference type="Gene3D" id="4.10.410.60">
    <property type="match status" value="1"/>
</dbReference>
<dbReference type="HAMAP" id="MF_00514">
    <property type="entry name" value="Ribosomal_bL35"/>
    <property type="match status" value="1"/>
</dbReference>
<dbReference type="InterPro" id="IPR001706">
    <property type="entry name" value="Ribosomal_bL35"/>
</dbReference>
<dbReference type="InterPro" id="IPR021137">
    <property type="entry name" value="Ribosomal_bL35-like"/>
</dbReference>
<dbReference type="InterPro" id="IPR018265">
    <property type="entry name" value="Ribosomal_bL35_CS"/>
</dbReference>
<dbReference type="InterPro" id="IPR037229">
    <property type="entry name" value="Ribosomal_bL35_sf"/>
</dbReference>
<dbReference type="NCBIfam" id="TIGR00001">
    <property type="entry name" value="rpmI_bact"/>
    <property type="match status" value="1"/>
</dbReference>
<dbReference type="PANTHER" id="PTHR33343">
    <property type="entry name" value="54S RIBOSOMAL PROTEIN BL35M"/>
    <property type="match status" value="1"/>
</dbReference>
<dbReference type="PANTHER" id="PTHR33343:SF1">
    <property type="entry name" value="LARGE RIBOSOMAL SUBUNIT PROTEIN BL35M"/>
    <property type="match status" value="1"/>
</dbReference>
<dbReference type="Pfam" id="PF01632">
    <property type="entry name" value="Ribosomal_L35p"/>
    <property type="match status" value="1"/>
</dbReference>
<dbReference type="PRINTS" id="PR00064">
    <property type="entry name" value="RIBOSOMALL35"/>
</dbReference>
<dbReference type="SUPFAM" id="SSF143034">
    <property type="entry name" value="L35p-like"/>
    <property type="match status" value="1"/>
</dbReference>
<dbReference type="PROSITE" id="PS00936">
    <property type="entry name" value="RIBOSOMAL_L35"/>
    <property type="match status" value="1"/>
</dbReference>
<gene>
    <name evidence="1" type="primary">rpmI</name>
    <name type="ordered locus">BAD_1075</name>
</gene>
<sequence>MPKMKTNSAASKRVRVTGSGKLMHAGSAMRHNLEHKSARKRRELKADGVLATSQSKNMKKLLGR</sequence>
<name>RL35_BIFAA</name>
<protein>
    <recommendedName>
        <fullName evidence="1">Large ribosomal subunit protein bL35</fullName>
    </recommendedName>
    <alternativeName>
        <fullName evidence="3">50S ribosomal protein L35</fullName>
    </alternativeName>
</protein>